<proteinExistence type="inferred from homology"/>
<keyword id="KW-1003">Cell membrane</keyword>
<keyword id="KW-0472">Membrane</keyword>
<keyword id="KW-0812">Transmembrane</keyword>
<keyword id="KW-1133">Transmembrane helix</keyword>
<keyword id="KW-0813">Transport</keyword>
<name>MDEP_STAAM</name>
<comment type="function">
    <text evidence="1">Involved in multidrug efflux.</text>
</comment>
<comment type="subcellular location">
    <subcellularLocation>
        <location evidence="3">Cell membrane</location>
        <topology evidence="3">Multi-pass membrane protein</topology>
    </subcellularLocation>
</comment>
<comment type="similarity">
    <text evidence="3">Belongs to the multidrug resistance efflux pump SepA family.</text>
</comment>
<organism>
    <name type="scientific">Staphylococcus aureus (strain Mu50 / ATCC 700699)</name>
    <dbReference type="NCBI Taxonomy" id="158878"/>
    <lineage>
        <taxon>Bacteria</taxon>
        <taxon>Bacillati</taxon>
        <taxon>Bacillota</taxon>
        <taxon>Bacilli</taxon>
        <taxon>Bacillales</taxon>
        <taxon>Staphylococcaceae</taxon>
        <taxon>Staphylococcus</taxon>
    </lineage>
</organism>
<accession>Q7A2M6</accession>
<protein>
    <recommendedName>
        <fullName>Multidrug resistance efflux pump SepA</fullName>
    </recommendedName>
    <alternativeName>
        <fullName>Antiseptic resistance protein SepA</fullName>
    </alternativeName>
    <alternativeName>
        <fullName>Staphylococcal efflux pump A</fullName>
    </alternativeName>
</protein>
<reference key="1">
    <citation type="journal article" date="2001" name="Lancet">
        <title>Whole genome sequencing of meticillin-resistant Staphylococcus aureus.</title>
        <authorList>
            <person name="Kuroda M."/>
            <person name="Ohta T."/>
            <person name="Uchiyama I."/>
            <person name="Baba T."/>
            <person name="Yuzawa H."/>
            <person name="Kobayashi I."/>
            <person name="Cui L."/>
            <person name="Oguchi A."/>
            <person name="Aoki K."/>
            <person name="Nagai Y."/>
            <person name="Lian J.-Q."/>
            <person name="Ito T."/>
            <person name="Kanamori M."/>
            <person name="Matsumaru H."/>
            <person name="Maruyama A."/>
            <person name="Murakami H."/>
            <person name="Hosoyama A."/>
            <person name="Mizutani-Ui Y."/>
            <person name="Takahashi N.K."/>
            <person name="Sawano T."/>
            <person name="Inoue R."/>
            <person name="Kaito C."/>
            <person name="Sekimizu K."/>
            <person name="Hirakawa H."/>
            <person name="Kuhara S."/>
            <person name="Goto S."/>
            <person name="Yabuzaki J."/>
            <person name="Kanehisa M."/>
            <person name="Yamashita A."/>
            <person name="Oshima K."/>
            <person name="Furuya K."/>
            <person name="Yoshino C."/>
            <person name="Shiba T."/>
            <person name="Hattori M."/>
            <person name="Ogasawara N."/>
            <person name="Hayashi H."/>
            <person name="Hiramatsu K."/>
        </authorList>
    </citation>
    <scope>NUCLEOTIDE SEQUENCE [LARGE SCALE GENOMIC DNA]</scope>
    <source>
        <strain>Mu50 / ATCC 700699</strain>
    </source>
</reference>
<sequence length="157" mass="18899">MIVNYLKHKFYNLLTTMIVLFIFVLSGAIFLTFLGFGLYGLSRILIYFRLGDFTYNRSMYDNLLYYGSYIIFGYFIIFAVEHLMDYFRKMLPENAYFRGATFHLISYTVATTLFYFIIHLNYVYINIDFWVIMVIIGFLYVCKLQFYPESKNLNNRK</sequence>
<dbReference type="EMBL" id="BA000017">
    <property type="protein sequence ID" value="BAB58329.1"/>
    <property type="molecule type" value="Genomic_DNA"/>
</dbReference>
<dbReference type="RefSeq" id="WP_000636857.1">
    <property type="nucleotide sequence ID" value="NC_002758.2"/>
</dbReference>
<dbReference type="KEGG" id="sav:SAV2167"/>
<dbReference type="HOGENOM" id="CLU_151983_0_0_9"/>
<dbReference type="Proteomes" id="UP000002481">
    <property type="component" value="Chromosome"/>
</dbReference>
<dbReference type="GO" id="GO:0005886">
    <property type="term" value="C:plasma membrane"/>
    <property type="evidence" value="ECO:0007669"/>
    <property type="project" value="UniProtKB-SubCell"/>
</dbReference>
<dbReference type="InterPro" id="IPR031396">
    <property type="entry name" value="SepA"/>
</dbReference>
<dbReference type="Pfam" id="PF17080">
    <property type="entry name" value="SepA"/>
    <property type="match status" value="1"/>
</dbReference>
<evidence type="ECO:0000250" key="1"/>
<evidence type="ECO:0000255" key="2"/>
<evidence type="ECO:0000305" key="3"/>
<gene>
    <name type="primary">sepA</name>
    <name type="ordered locus">SAV2167</name>
</gene>
<feature type="chain" id="PRO_0000351488" description="Multidrug resistance efflux pump SepA">
    <location>
        <begin position="1"/>
        <end position="157"/>
    </location>
</feature>
<feature type="transmembrane region" description="Helical" evidence="2">
    <location>
        <begin position="18"/>
        <end position="38"/>
    </location>
</feature>
<feature type="transmembrane region" description="Helical" evidence="2">
    <location>
        <begin position="63"/>
        <end position="83"/>
    </location>
</feature>
<feature type="transmembrane region" description="Helical" evidence="2">
    <location>
        <begin position="100"/>
        <end position="120"/>
    </location>
</feature>
<feature type="transmembrane region" description="Helical" evidence="2">
    <location>
        <begin position="122"/>
        <end position="142"/>
    </location>
</feature>